<dbReference type="EMBL" id="BA000045">
    <property type="protein sequence ID" value="BAC89543.1"/>
    <property type="molecule type" value="Genomic_DNA"/>
</dbReference>
<dbReference type="RefSeq" id="NP_924548.1">
    <property type="nucleotide sequence ID" value="NC_005125.1"/>
</dbReference>
<dbReference type="RefSeq" id="WP_011141601.1">
    <property type="nucleotide sequence ID" value="NC_005125.1"/>
</dbReference>
<dbReference type="SMR" id="Q7NK76"/>
<dbReference type="FunCoup" id="Q7NK76">
    <property type="interactions" value="198"/>
</dbReference>
<dbReference type="STRING" id="251221.gene:10759092"/>
<dbReference type="EnsemblBacteria" id="BAC89543">
    <property type="protein sequence ID" value="BAC89543"/>
    <property type="gene ID" value="BAC89543"/>
</dbReference>
<dbReference type="KEGG" id="gvi:glr1602"/>
<dbReference type="PATRIC" id="fig|251221.4.peg.1640"/>
<dbReference type="eggNOG" id="COG0222">
    <property type="taxonomic scope" value="Bacteria"/>
</dbReference>
<dbReference type="HOGENOM" id="CLU_086499_3_0_3"/>
<dbReference type="InParanoid" id="Q7NK76"/>
<dbReference type="OrthoDB" id="9811748at2"/>
<dbReference type="PhylomeDB" id="Q7NK76"/>
<dbReference type="Proteomes" id="UP000000557">
    <property type="component" value="Chromosome"/>
</dbReference>
<dbReference type="GO" id="GO:0022625">
    <property type="term" value="C:cytosolic large ribosomal subunit"/>
    <property type="evidence" value="ECO:0000318"/>
    <property type="project" value="GO_Central"/>
</dbReference>
<dbReference type="GO" id="GO:0003729">
    <property type="term" value="F:mRNA binding"/>
    <property type="evidence" value="ECO:0000318"/>
    <property type="project" value="GO_Central"/>
</dbReference>
<dbReference type="GO" id="GO:0003735">
    <property type="term" value="F:structural constituent of ribosome"/>
    <property type="evidence" value="ECO:0000318"/>
    <property type="project" value="GO_Central"/>
</dbReference>
<dbReference type="GO" id="GO:0006412">
    <property type="term" value="P:translation"/>
    <property type="evidence" value="ECO:0000318"/>
    <property type="project" value="GO_Central"/>
</dbReference>
<dbReference type="CDD" id="cd00387">
    <property type="entry name" value="Ribosomal_L7_L12"/>
    <property type="match status" value="1"/>
</dbReference>
<dbReference type="FunFam" id="3.30.1390.10:FF:000001">
    <property type="entry name" value="50S ribosomal protein L7/L12"/>
    <property type="match status" value="1"/>
</dbReference>
<dbReference type="Gene3D" id="3.30.1390.10">
    <property type="match status" value="1"/>
</dbReference>
<dbReference type="Gene3D" id="1.20.5.710">
    <property type="entry name" value="Single helix bin"/>
    <property type="match status" value="1"/>
</dbReference>
<dbReference type="HAMAP" id="MF_00368">
    <property type="entry name" value="Ribosomal_bL12"/>
    <property type="match status" value="1"/>
</dbReference>
<dbReference type="InterPro" id="IPR000206">
    <property type="entry name" value="Ribosomal_bL12"/>
</dbReference>
<dbReference type="InterPro" id="IPR013823">
    <property type="entry name" value="Ribosomal_bL12_C"/>
</dbReference>
<dbReference type="InterPro" id="IPR014719">
    <property type="entry name" value="Ribosomal_bL12_C/ClpS-like"/>
</dbReference>
<dbReference type="InterPro" id="IPR008932">
    <property type="entry name" value="Ribosomal_bL12_oligo"/>
</dbReference>
<dbReference type="InterPro" id="IPR036235">
    <property type="entry name" value="Ribosomal_bL12_oligo_N_sf"/>
</dbReference>
<dbReference type="NCBIfam" id="TIGR00855">
    <property type="entry name" value="L12"/>
    <property type="match status" value="1"/>
</dbReference>
<dbReference type="PANTHER" id="PTHR45987">
    <property type="entry name" value="39S RIBOSOMAL PROTEIN L12"/>
    <property type="match status" value="1"/>
</dbReference>
<dbReference type="PANTHER" id="PTHR45987:SF4">
    <property type="entry name" value="LARGE RIBOSOMAL SUBUNIT PROTEIN BL12M"/>
    <property type="match status" value="1"/>
</dbReference>
<dbReference type="Pfam" id="PF00542">
    <property type="entry name" value="Ribosomal_L12"/>
    <property type="match status" value="1"/>
</dbReference>
<dbReference type="Pfam" id="PF16320">
    <property type="entry name" value="Ribosomal_L12_N"/>
    <property type="match status" value="1"/>
</dbReference>
<dbReference type="SUPFAM" id="SSF54736">
    <property type="entry name" value="ClpS-like"/>
    <property type="match status" value="1"/>
</dbReference>
<dbReference type="SUPFAM" id="SSF48300">
    <property type="entry name" value="Ribosomal protein L7/12, oligomerisation (N-terminal) domain"/>
    <property type="match status" value="1"/>
</dbReference>
<name>RL7_GLOVI</name>
<proteinExistence type="inferred from homology"/>
<sequence>MASERVEKILEDLKALSLLEAAELVKGIEEVFGVKAEAPAGGGMMVMPGVMPGAPAAAAPAEPVEEQTEFTVMLEEVPADKKIAILKVAREITGLGLKEAKDLVEAAPKAVKEGVNKDDAATIKKKLEEAGAKASIK</sequence>
<feature type="chain" id="PRO_0000243429" description="Large ribosomal subunit protein bL12">
    <location>
        <begin position="1"/>
        <end position="137"/>
    </location>
</feature>
<protein>
    <recommendedName>
        <fullName evidence="1">Large ribosomal subunit protein bL12</fullName>
    </recommendedName>
    <alternativeName>
        <fullName evidence="2">50S ribosomal protein L7/L12</fullName>
    </alternativeName>
</protein>
<keyword id="KW-1185">Reference proteome</keyword>
<keyword id="KW-0687">Ribonucleoprotein</keyword>
<keyword id="KW-0689">Ribosomal protein</keyword>
<gene>
    <name evidence="1" type="primary">rplL</name>
    <name evidence="1" type="synonym">rpl12</name>
    <name type="ordered locus">glr1602</name>
</gene>
<organism>
    <name type="scientific">Gloeobacter violaceus (strain ATCC 29082 / PCC 7421)</name>
    <dbReference type="NCBI Taxonomy" id="251221"/>
    <lineage>
        <taxon>Bacteria</taxon>
        <taxon>Bacillati</taxon>
        <taxon>Cyanobacteriota</taxon>
        <taxon>Cyanophyceae</taxon>
        <taxon>Gloeobacterales</taxon>
        <taxon>Gloeobacteraceae</taxon>
        <taxon>Gloeobacter</taxon>
    </lineage>
</organism>
<evidence type="ECO:0000255" key="1">
    <source>
        <dbReference type="HAMAP-Rule" id="MF_00368"/>
    </source>
</evidence>
<evidence type="ECO:0000305" key="2"/>
<accession>Q7NK76</accession>
<comment type="function">
    <text evidence="1">Forms part of the ribosomal stalk which helps the ribosome interact with GTP-bound translation factors. Is thus essential for accurate translation.</text>
</comment>
<comment type="subunit">
    <text evidence="1">Homodimer. Part of the ribosomal stalk of the 50S ribosomal subunit. Forms a multimeric L10(L12)X complex, where L10 forms an elongated spine to which 2 to 4 L12 dimers bind in a sequential fashion. Binds GTP-bound translation factors.</text>
</comment>
<comment type="similarity">
    <text evidence="1">Belongs to the bacterial ribosomal protein bL12 family.</text>
</comment>
<reference key="1">
    <citation type="journal article" date="2003" name="DNA Res.">
        <title>Complete genome structure of Gloeobacter violaceus PCC 7421, a cyanobacterium that lacks thylakoids.</title>
        <authorList>
            <person name="Nakamura Y."/>
            <person name="Kaneko T."/>
            <person name="Sato S."/>
            <person name="Mimuro M."/>
            <person name="Miyashita H."/>
            <person name="Tsuchiya T."/>
            <person name="Sasamoto S."/>
            <person name="Watanabe A."/>
            <person name="Kawashima K."/>
            <person name="Kishida Y."/>
            <person name="Kiyokawa C."/>
            <person name="Kohara M."/>
            <person name="Matsumoto M."/>
            <person name="Matsuno A."/>
            <person name="Nakazaki N."/>
            <person name="Shimpo S."/>
            <person name="Takeuchi C."/>
            <person name="Yamada M."/>
            <person name="Tabata S."/>
        </authorList>
    </citation>
    <scope>NUCLEOTIDE SEQUENCE [LARGE SCALE GENOMIC DNA]</scope>
    <source>
        <strain>ATCC 29082 / PCC 7421</strain>
    </source>
</reference>